<dbReference type="EMBL" id="AY653733">
    <property type="protein sequence ID" value="AAV50527.1"/>
    <property type="molecule type" value="Genomic_DNA"/>
</dbReference>
<dbReference type="KEGG" id="vg:9924864"/>
<dbReference type="OrthoDB" id="10677at10239"/>
<dbReference type="Proteomes" id="UP000001134">
    <property type="component" value="Genome"/>
</dbReference>
<dbReference type="Gene3D" id="1.25.40.180">
    <property type="match status" value="1"/>
</dbReference>
<proteinExistence type="predicted"/>
<organismHost>
    <name type="scientific">Acanthamoeba polyphaga</name>
    <name type="common">Amoeba</name>
    <dbReference type="NCBI Taxonomy" id="5757"/>
</organismHost>
<feature type="chain" id="PRO_0000071252" description="Uncharacterized protein R255">
    <location>
        <begin position="1"/>
        <end position="312"/>
    </location>
</feature>
<accession>Q5UPT9</accession>
<gene>
    <name type="ordered locus">MIMI_R255</name>
</gene>
<sequence>MSDTIYNPKIITIEQFESFSERKVKPIDGLNIPNIFYPPHLVNKKRPTEADNSLTINIRQLFNSLSDTNINKVKDQLKETIITKAKNENMIEEIAKEILSNFVISEKNIRNYMVLLNAVSGTCVLLADSETKKTSPTIGKYFIDNCKTDIFHHISESTVRELANMDLDDSDQLDLYNRKRETVINLILTLCFLYGQRNTDLIRLTASQLYPLINTIMNTYDSLQAKMKILGNPYDGDDCEDEEEYEILSKMCTIYAEQLYTFINKEVSSFLLDDTVVKGMLMKNLVERFKNTIVPTLTEAYLRSKCSCIQYN</sequence>
<name>YR255_MIMIV</name>
<protein>
    <recommendedName>
        <fullName>Uncharacterized protein R255</fullName>
    </recommendedName>
</protein>
<keyword id="KW-1185">Reference proteome</keyword>
<organism>
    <name type="scientific">Acanthamoeba polyphaga mimivirus</name>
    <name type="common">APMV</name>
    <dbReference type="NCBI Taxonomy" id="212035"/>
    <lineage>
        <taxon>Viruses</taxon>
        <taxon>Varidnaviria</taxon>
        <taxon>Bamfordvirae</taxon>
        <taxon>Nucleocytoviricota</taxon>
        <taxon>Megaviricetes</taxon>
        <taxon>Imitervirales</taxon>
        <taxon>Mimiviridae</taxon>
        <taxon>Megamimivirinae</taxon>
        <taxon>Mimivirus</taxon>
        <taxon>Mimivirus bradfordmassiliense</taxon>
    </lineage>
</organism>
<reference key="1">
    <citation type="journal article" date="2004" name="Science">
        <title>The 1.2-megabase genome sequence of Mimivirus.</title>
        <authorList>
            <person name="Raoult D."/>
            <person name="Audic S."/>
            <person name="Robert C."/>
            <person name="Abergel C."/>
            <person name="Renesto P."/>
            <person name="Ogata H."/>
            <person name="La Scola B."/>
            <person name="Susan M."/>
            <person name="Claverie J.-M."/>
        </authorList>
    </citation>
    <scope>NUCLEOTIDE SEQUENCE [LARGE SCALE GENOMIC DNA]</scope>
    <source>
        <strain>Rowbotham-Bradford</strain>
    </source>
</reference>